<protein>
    <recommendedName>
        <fullName evidence="9">Opicalcin-2</fullName>
        <shortName evidence="9">OpCa2</shortName>
    </recommendedName>
    <alternativeName>
        <fullName evidence="8">Opicalcine-2</fullName>
    </alternativeName>
</protein>
<feature type="signal peptide" evidence="6">
    <location>
        <begin position="1"/>
        <end position="22"/>
    </location>
</feature>
<feature type="propeptide" id="PRO_0000035353" evidence="1">
    <location>
        <begin position="23"/>
        <end position="31"/>
    </location>
</feature>
<feature type="chain" id="PRO_0000035354" description="Opicalcin-2">
    <location>
        <begin position="34"/>
        <end position="66"/>
    </location>
</feature>
<feature type="region of interest" description="Essential for stimulation of [3H]ryanodine binding to RYR1" evidence="4 5">
    <location>
        <begin position="55"/>
        <end position="57"/>
    </location>
</feature>
<feature type="site" description="Essential for stimulation of [3H]ryanodine binding to RYR1" evidence="4">
    <location>
        <position position="64"/>
    </location>
</feature>
<feature type="site" description="Essential for stimulation of [3H]ryanodine binding to RYR1" evidence="4">
    <location>
        <position position="66"/>
    </location>
</feature>
<feature type="disulfide bond" evidence="4">
    <location>
        <begin position="36"/>
        <end position="50"/>
    </location>
</feature>
<feature type="disulfide bond" evidence="4">
    <location>
        <begin position="43"/>
        <end position="54"/>
    </location>
</feature>
<feature type="disulfide bond" evidence="4">
    <location>
        <begin position="49"/>
        <end position="65"/>
    </location>
</feature>
<keyword id="KW-0108">Calcium channel impairing toxin</keyword>
<keyword id="KW-0165">Cleavage on pair of basic residues</keyword>
<keyword id="KW-1015">Disulfide bond</keyword>
<keyword id="KW-0872">Ion channel impairing toxin</keyword>
<keyword id="KW-0960">Knottin</keyword>
<keyword id="KW-0528">Neurotoxin</keyword>
<keyword id="KW-1219">Ryanodine-sensitive calcium-release channel impairing toxin</keyword>
<keyword id="KW-0964">Secreted</keyword>
<keyword id="KW-0732">Signal</keyword>
<keyword id="KW-0800">Toxin</keyword>
<proteinExistence type="inferred from homology"/>
<reference key="1">
    <citation type="journal article" date="2003" name="FASEB J.">
        <title>Evolutionary origin of inhibitor cystine knot peptides.</title>
        <authorList>
            <person name="Zhu S.-Y."/>
            <person name="Darbon H."/>
            <person name="Dyason K."/>
            <person name="Verdonck F."/>
            <person name="Tytgat J."/>
        </authorList>
    </citation>
    <scope>NUCLEOTIDE SEQUENCE [GENOMIC DNA]</scope>
    <source>
        <tissue>Venom gland</tissue>
    </source>
</reference>
<reference key="2">
    <citation type="journal article" date="2016" name="J. Gen. Physiol.">
        <title>Structure-function relationships of peptides forming the calcin family of ryanodine receptor ligands.</title>
        <authorList>
            <person name="Xiao L."/>
            <person name="Gurrola G.B."/>
            <person name="Zhang J."/>
            <person name="Valdivia C.R."/>
            <person name="SanMartin M."/>
            <person name="Zamudio F.Z."/>
            <person name="Zhang L."/>
            <person name="Possani L.D."/>
            <person name="Valdivia H.H."/>
        </authorList>
    </citation>
    <scope>FUNCTION</scope>
    <scope>SYNTHESIS OF 34-66</scope>
    <scope>3D-STRUCTURE MODELING</scope>
</reference>
<comment type="function">
    <text evidence="2 3 4 5 7">This toxin stabilizes ryanodine receptor 1 (RyR1) opening in a long-lasting subconductance state (40% of the full conductance state) (PubMed:27114612). Furthermore, it triggers calcium release from sarcoplasmic vesicles (64.2 nM are enough to induce a sharp release, and 50% of the total calcium is released after toxin (100 nM) addition) probably by acting as a cell-penetrating peptide (CPP) (PubMed:27114612). In addition, it has been shown to dose-dependently stimulate ryanodine binding to RyR1 (EC(50)=3.2 nM) (PubMed:27114612). It also augments the bell-shaped calcium-[3H]ryanodine binding curve that is maximal at about 10 uM calcium concentration (PubMed:27114612). It binds a different site as ryanodine (By similarity). It acts synergistically with caffeine (By similarity). In vivo, intracerebroventricular injection into mice induces neurotoxic symptoms, followed by death (By similarity).</text>
</comment>
<comment type="subcellular location">
    <subcellularLocation>
        <location evidence="10">Secreted</location>
    </subcellularLocation>
</comment>
<comment type="tissue specificity">
    <text evidence="10">Expressed by the venom gland.</text>
</comment>
<comment type="domain">
    <text evidence="4">The presence of a 'disulfide through disulfide knot' structurally defines this protein as a knottin.</text>
</comment>
<comment type="similarity">
    <text evidence="10">Belongs to the scorpion calcin family.</text>
</comment>
<dbReference type="SMR" id="P60253"/>
<dbReference type="GO" id="GO:0005576">
    <property type="term" value="C:extracellular region"/>
    <property type="evidence" value="ECO:0007669"/>
    <property type="project" value="UniProtKB-SubCell"/>
</dbReference>
<dbReference type="GO" id="GO:0019855">
    <property type="term" value="F:calcium channel inhibitor activity"/>
    <property type="evidence" value="ECO:0007669"/>
    <property type="project" value="InterPro"/>
</dbReference>
<dbReference type="GO" id="GO:0090729">
    <property type="term" value="F:toxin activity"/>
    <property type="evidence" value="ECO:0007669"/>
    <property type="project" value="UniProtKB-KW"/>
</dbReference>
<dbReference type="InterPro" id="IPR012632">
    <property type="entry name" value="Scorpion_calcine"/>
</dbReference>
<dbReference type="Pfam" id="PF08099">
    <property type="entry name" value="Toxin_27"/>
    <property type="match status" value="1"/>
</dbReference>
<dbReference type="SUPFAM" id="SSF57059">
    <property type="entry name" value="omega toxin-like"/>
    <property type="match status" value="1"/>
</dbReference>
<dbReference type="PROSITE" id="PS60028">
    <property type="entry name" value="SCORPION_CALCINE"/>
    <property type="match status" value="1"/>
</dbReference>
<sequence length="66" mass="7644">MKPSLIIVTFIVVFMTISCVAADDEQETWIEKRGDCLPHLKRCKENNDCCSKKCKRRGANPEKRCR</sequence>
<organism>
    <name type="scientific">Opistophthalmus carinatus</name>
    <name type="common">African yellow leg scorpion</name>
    <dbReference type="NCBI Taxonomy" id="190115"/>
    <lineage>
        <taxon>Eukaryota</taxon>
        <taxon>Metazoa</taxon>
        <taxon>Ecdysozoa</taxon>
        <taxon>Arthropoda</taxon>
        <taxon>Chelicerata</taxon>
        <taxon>Arachnida</taxon>
        <taxon>Scorpiones</taxon>
        <taxon>Iurida</taxon>
        <taxon>Scorpionoidea</taxon>
        <taxon>Scorpionidae</taxon>
        <taxon>Opistophthalminae</taxon>
        <taxon>Opistophthalmus</taxon>
    </lineage>
</organism>
<accession>P60253</accession>
<name>CAOP2_OPICA</name>
<evidence type="ECO:0000250" key="1"/>
<evidence type="ECO:0000250" key="2">
    <source>
        <dbReference type="UniProtKB" id="A0A1L4BJ42"/>
    </source>
</evidence>
<evidence type="ECO:0000250" key="3">
    <source>
        <dbReference type="UniProtKB" id="B8QG00"/>
    </source>
</evidence>
<evidence type="ECO:0000250" key="4">
    <source>
        <dbReference type="UniProtKB" id="P59868"/>
    </source>
</evidence>
<evidence type="ECO:0000250" key="5">
    <source>
        <dbReference type="UniProtKB" id="P60254"/>
    </source>
</evidence>
<evidence type="ECO:0000255" key="6"/>
<evidence type="ECO:0000269" key="7">
    <source>
    </source>
</evidence>
<evidence type="ECO:0000303" key="8">
    <source>
    </source>
</evidence>
<evidence type="ECO:0000303" key="9">
    <source>
    </source>
</evidence>
<evidence type="ECO:0000305" key="10"/>